<name>RS4C_SCHPO</name>
<feature type="chain" id="PRO_0000130841" description="Small ribosomal subunit protein eS4C">
    <location>
        <begin position="1"/>
        <end position="262"/>
    </location>
</feature>
<feature type="domain" description="S4 RNA-binding">
    <location>
        <begin position="42"/>
        <end position="105"/>
    </location>
</feature>
<feature type="modified residue" description="Phosphothreonine" evidence="3">
    <location>
        <position position="194"/>
    </location>
</feature>
<sequence>MVRGPKKHLKRVAAPHHWLLDKLSGTYAPKPSPGPHKARECLPLIVFLRNRLKYALNGREVKAILMQRLIKVDGKVRTDSTFPTGFMDVISVDKTGEHFRLVYDIKGRFTVHRITAEEAKYKLCKVKRVQLGAKGVPFLVTHDGRTIRYPDPLIKVNDTIKLNLETNKIESFIKFDTSAQVMVTGGRNMGRVGTIVHREHHLGSFEIIHVKDALDREFATRLSNVFVIGETGKSWISLPKGKGVKLSITEERDRRRALKGLA</sequence>
<comment type="function">
    <text evidence="1">Component of the ribosome, a large ribonucleoprotein complex responsible for the synthesis of proteins in the cell. The small ribosomal subunit (SSU) binds messenger RNAs (mRNAs) and translates the encoded message by selecting cognate aminoacyl-transfer RNA (tRNA) molecules. The large subunit (LSU) contains the ribosomal catalytic site termed the peptidyl transferase center (PTC), which catalyzes the formation of peptide bonds, thereby polymerizing the amino acids delivered by tRNAs into a polypeptide chain. The nascent polypeptides leave the ribosome through a tunnel in the LSU and interact with protein factors that function in enzymatic processing, targeting, and the membrane insertion of nascent chains at the exit of the ribosomal tunnel.</text>
</comment>
<comment type="subunit">
    <text evidence="1">Component of the small ribosomal subunit (SSU). Mature yeast ribosomes consist of a small (40S) and a large (60S) subunit. The 40S small subunit contains 1 molecule of ribosomal RNA (18S rRNA) and at least 33 different proteins. The large 60S subunit contains 3 rRNA molecules (25S, 5.8S and 5S rRNA) and at least 46 different proteins.</text>
</comment>
<comment type="subcellular location">
    <subcellularLocation>
        <location evidence="2">Cytoplasm</location>
    </subcellularLocation>
</comment>
<comment type="miscellaneous">
    <text>There are 3 genes for eS4 in S.pombe.</text>
</comment>
<comment type="similarity">
    <text evidence="4">Belongs to the eukaryotic ribosomal protein eS4 family.</text>
</comment>
<proteinExistence type="evidence at protein level"/>
<organism>
    <name type="scientific">Schizosaccharomyces pombe (strain 972 / ATCC 24843)</name>
    <name type="common">Fission yeast</name>
    <dbReference type="NCBI Taxonomy" id="284812"/>
    <lineage>
        <taxon>Eukaryota</taxon>
        <taxon>Fungi</taxon>
        <taxon>Dikarya</taxon>
        <taxon>Ascomycota</taxon>
        <taxon>Taphrinomycotina</taxon>
        <taxon>Schizosaccharomycetes</taxon>
        <taxon>Schizosaccharomycetales</taxon>
        <taxon>Schizosaccharomycetaceae</taxon>
        <taxon>Schizosaccharomyces</taxon>
    </lineage>
</organism>
<reference key="1">
    <citation type="journal article" date="2002" name="Nature">
        <title>The genome sequence of Schizosaccharomyces pombe.</title>
        <authorList>
            <person name="Wood V."/>
            <person name="Gwilliam R."/>
            <person name="Rajandream M.A."/>
            <person name="Lyne M.H."/>
            <person name="Lyne R."/>
            <person name="Stewart A."/>
            <person name="Sgouros J.G."/>
            <person name="Peat N."/>
            <person name="Hayles J."/>
            <person name="Baker S.G."/>
            <person name="Basham D."/>
            <person name="Bowman S."/>
            <person name="Brooks K."/>
            <person name="Brown D."/>
            <person name="Brown S."/>
            <person name="Chillingworth T."/>
            <person name="Churcher C.M."/>
            <person name="Collins M."/>
            <person name="Connor R."/>
            <person name="Cronin A."/>
            <person name="Davis P."/>
            <person name="Feltwell T."/>
            <person name="Fraser A."/>
            <person name="Gentles S."/>
            <person name="Goble A."/>
            <person name="Hamlin N."/>
            <person name="Harris D.E."/>
            <person name="Hidalgo J."/>
            <person name="Hodgson G."/>
            <person name="Holroyd S."/>
            <person name="Hornsby T."/>
            <person name="Howarth S."/>
            <person name="Huckle E.J."/>
            <person name="Hunt S."/>
            <person name="Jagels K."/>
            <person name="James K.D."/>
            <person name="Jones L."/>
            <person name="Jones M."/>
            <person name="Leather S."/>
            <person name="McDonald S."/>
            <person name="McLean J."/>
            <person name="Mooney P."/>
            <person name="Moule S."/>
            <person name="Mungall K.L."/>
            <person name="Murphy L.D."/>
            <person name="Niblett D."/>
            <person name="Odell C."/>
            <person name="Oliver K."/>
            <person name="O'Neil S."/>
            <person name="Pearson D."/>
            <person name="Quail M.A."/>
            <person name="Rabbinowitsch E."/>
            <person name="Rutherford K.M."/>
            <person name="Rutter S."/>
            <person name="Saunders D."/>
            <person name="Seeger K."/>
            <person name="Sharp S."/>
            <person name="Skelton J."/>
            <person name="Simmonds M.N."/>
            <person name="Squares R."/>
            <person name="Squares S."/>
            <person name="Stevens K."/>
            <person name="Taylor K."/>
            <person name="Taylor R.G."/>
            <person name="Tivey A."/>
            <person name="Walsh S.V."/>
            <person name="Warren T."/>
            <person name="Whitehead S."/>
            <person name="Woodward J.R."/>
            <person name="Volckaert G."/>
            <person name="Aert R."/>
            <person name="Robben J."/>
            <person name="Grymonprez B."/>
            <person name="Weltjens I."/>
            <person name="Vanstreels E."/>
            <person name="Rieger M."/>
            <person name="Schaefer M."/>
            <person name="Mueller-Auer S."/>
            <person name="Gabel C."/>
            <person name="Fuchs M."/>
            <person name="Duesterhoeft A."/>
            <person name="Fritzc C."/>
            <person name="Holzer E."/>
            <person name="Moestl D."/>
            <person name="Hilbert H."/>
            <person name="Borzym K."/>
            <person name="Langer I."/>
            <person name="Beck A."/>
            <person name="Lehrach H."/>
            <person name="Reinhardt R."/>
            <person name="Pohl T.M."/>
            <person name="Eger P."/>
            <person name="Zimmermann W."/>
            <person name="Wedler H."/>
            <person name="Wambutt R."/>
            <person name="Purnelle B."/>
            <person name="Goffeau A."/>
            <person name="Cadieu E."/>
            <person name="Dreano S."/>
            <person name="Gloux S."/>
            <person name="Lelaure V."/>
            <person name="Mottier S."/>
            <person name="Galibert F."/>
            <person name="Aves S.J."/>
            <person name="Xiang Z."/>
            <person name="Hunt C."/>
            <person name="Moore K."/>
            <person name="Hurst S.M."/>
            <person name="Lucas M."/>
            <person name="Rochet M."/>
            <person name="Gaillardin C."/>
            <person name="Tallada V.A."/>
            <person name="Garzon A."/>
            <person name="Thode G."/>
            <person name="Daga R.R."/>
            <person name="Cruzado L."/>
            <person name="Jimenez J."/>
            <person name="Sanchez M."/>
            <person name="del Rey F."/>
            <person name="Benito J."/>
            <person name="Dominguez A."/>
            <person name="Revuelta J.L."/>
            <person name="Moreno S."/>
            <person name="Armstrong J."/>
            <person name="Forsburg S.L."/>
            <person name="Cerutti L."/>
            <person name="Lowe T."/>
            <person name="McCombie W.R."/>
            <person name="Paulsen I."/>
            <person name="Potashkin J."/>
            <person name="Shpakovski G.V."/>
            <person name="Ussery D."/>
            <person name="Barrell B.G."/>
            <person name="Nurse P."/>
        </authorList>
    </citation>
    <scope>NUCLEOTIDE SEQUENCE [LARGE SCALE GENOMIC DNA]</scope>
    <source>
        <strain>972 / ATCC 24843</strain>
    </source>
</reference>
<reference key="2">
    <citation type="submission" date="1998-10" db="EMBL/GenBank/DDBJ databases">
        <title>S.pombe ribosomal protein S4 homolog.</title>
        <authorList>
            <person name="Kawamukai M."/>
        </authorList>
    </citation>
    <scope>NUCLEOTIDE SEQUENCE [MRNA] OF 3-262</scope>
</reference>
<reference key="3">
    <citation type="journal article" date="2006" name="Nat. Biotechnol.">
        <title>ORFeome cloning and global analysis of protein localization in the fission yeast Schizosaccharomyces pombe.</title>
        <authorList>
            <person name="Matsuyama A."/>
            <person name="Arai R."/>
            <person name="Yashiroda Y."/>
            <person name="Shirai A."/>
            <person name="Kamata A."/>
            <person name="Sekido S."/>
            <person name="Kobayashi Y."/>
            <person name="Hashimoto A."/>
            <person name="Hamamoto M."/>
            <person name="Hiraoka Y."/>
            <person name="Horinouchi S."/>
            <person name="Yoshida M."/>
        </authorList>
    </citation>
    <scope>SUBCELLULAR LOCATION [LARGE SCALE ANALYSIS]</scope>
</reference>
<reference key="4">
    <citation type="journal article" date="2008" name="J. Proteome Res.">
        <title>Phosphoproteome analysis of fission yeast.</title>
        <authorList>
            <person name="Wilson-Grady J.T."/>
            <person name="Villen J."/>
            <person name="Gygi S.P."/>
        </authorList>
    </citation>
    <scope>PHOSPHORYLATION [LARGE SCALE ANALYSIS] AT THR-194</scope>
    <scope>IDENTIFICATION BY MASS SPECTROMETRY</scope>
</reference>
<dbReference type="EMBL" id="CU329670">
    <property type="protein sequence ID" value="CAB93014.1"/>
    <property type="molecule type" value="Genomic_DNA"/>
</dbReference>
<dbReference type="EMBL" id="AB018354">
    <property type="protein sequence ID" value="BAA33778.1"/>
    <property type="molecule type" value="mRNA"/>
</dbReference>
<dbReference type="PIR" id="T43429">
    <property type="entry name" value="T43429"/>
</dbReference>
<dbReference type="RefSeq" id="NP_594174.1">
    <property type="nucleotide sequence ID" value="NM_001019599.2"/>
</dbReference>
<dbReference type="PDB" id="9AXT">
    <property type="method" value="EM"/>
    <property type="resolution" value="2.40 A"/>
    <property type="chains" value="AH=1-262"/>
</dbReference>
<dbReference type="PDB" id="9AXV">
    <property type="method" value="EM"/>
    <property type="resolution" value="2.40 A"/>
    <property type="chains" value="AH=1-262"/>
</dbReference>
<dbReference type="PDBsum" id="9AXT"/>
<dbReference type="PDBsum" id="9AXV"/>
<dbReference type="EMDB" id="EMD-43972"/>
<dbReference type="EMDB" id="EMD-43976"/>
<dbReference type="SMR" id="Q9P4W9"/>
<dbReference type="BioGRID" id="279906">
    <property type="interactions" value="20"/>
</dbReference>
<dbReference type="FunCoup" id="Q9P4W9">
    <property type="interactions" value="446"/>
</dbReference>
<dbReference type="STRING" id="284812.Q9P4W9"/>
<dbReference type="iPTMnet" id="Q9P4W9"/>
<dbReference type="PaxDb" id="4896-SPAC959.07.1"/>
<dbReference type="EnsemblFungi" id="SPAC959.07.1">
    <property type="protein sequence ID" value="SPAC959.07.1:pep"/>
    <property type="gene ID" value="SPAC959.07"/>
</dbReference>
<dbReference type="GeneID" id="2543486"/>
<dbReference type="KEGG" id="spo:2543486"/>
<dbReference type="PomBase" id="SPAC959.07">
    <property type="gene designation" value="rps403"/>
</dbReference>
<dbReference type="VEuPathDB" id="FungiDB:SPAC959.07"/>
<dbReference type="eggNOG" id="KOG0378">
    <property type="taxonomic scope" value="Eukaryota"/>
</dbReference>
<dbReference type="HOGENOM" id="CLU_060400_1_0_1"/>
<dbReference type="InParanoid" id="Q9P4W9"/>
<dbReference type="OMA" id="KANDTHK"/>
<dbReference type="PhylomeDB" id="Q9P4W9"/>
<dbReference type="Reactome" id="R-SPO-156827">
    <property type="pathway name" value="L13a-mediated translational silencing of Ceruloplasmin expression"/>
</dbReference>
<dbReference type="Reactome" id="R-SPO-1799339">
    <property type="pathway name" value="SRP-dependent cotranslational protein targeting to membrane"/>
</dbReference>
<dbReference type="Reactome" id="R-SPO-72649">
    <property type="pathway name" value="Translation initiation complex formation"/>
</dbReference>
<dbReference type="Reactome" id="R-SPO-72689">
    <property type="pathway name" value="Formation of a pool of free 40S subunits"/>
</dbReference>
<dbReference type="Reactome" id="R-SPO-72695">
    <property type="pathway name" value="Formation of the ternary complex, and subsequently, the 43S complex"/>
</dbReference>
<dbReference type="Reactome" id="R-SPO-72702">
    <property type="pathway name" value="Ribosomal scanning and start codon recognition"/>
</dbReference>
<dbReference type="Reactome" id="R-SPO-72706">
    <property type="pathway name" value="GTP hydrolysis and joining of the 60S ribosomal subunit"/>
</dbReference>
<dbReference type="Reactome" id="R-SPO-975956">
    <property type="pathway name" value="Nonsense Mediated Decay (NMD) independent of the Exon Junction Complex (EJC)"/>
</dbReference>
<dbReference type="Reactome" id="R-SPO-975957">
    <property type="pathway name" value="Nonsense Mediated Decay (NMD) enhanced by the Exon Junction Complex (EJC)"/>
</dbReference>
<dbReference type="PRO" id="PR:Q9P4W9"/>
<dbReference type="Proteomes" id="UP000002485">
    <property type="component" value="Chromosome I"/>
</dbReference>
<dbReference type="GO" id="GO:0005829">
    <property type="term" value="C:cytosol"/>
    <property type="evidence" value="ECO:0007005"/>
    <property type="project" value="PomBase"/>
</dbReference>
<dbReference type="GO" id="GO:0022627">
    <property type="term" value="C:cytosolic small ribosomal subunit"/>
    <property type="evidence" value="ECO:0000269"/>
    <property type="project" value="PomBase"/>
</dbReference>
<dbReference type="GO" id="GO:0003723">
    <property type="term" value="F:RNA binding"/>
    <property type="evidence" value="ECO:0000318"/>
    <property type="project" value="GO_Central"/>
</dbReference>
<dbReference type="GO" id="GO:0019843">
    <property type="term" value="F:rRNA binding"/>
    <property type="evidence" value="ECO:0007669"/>
    <property type="project" value="UniProtKB-KW"/>
</dbReference>
<dbReference type="GO" id="GO:0003735">
    <property type="term" value="F:structural constituent of ribosome"/>
    <property type="evidence" value="ECO:0000318"/>
    <property type="project" value="GO_Central"/>
</dbReference>
<dbReference type="GO" id="GO:0002181">
    <property type="term" value="P:cytoplasmic translation"/>
    <property type="evidence" value="ECO:0000266"/>
    <property type="project" value="PomBase"/>
</dbReference>
<dbReference type="GO" id="GO:0006412">
    <property type="term" value="P:translation"/>
    <property type="evidence" value="ECO:0000318"/>
    <property type="project" value="GO_Central"/>
</dbReference>
<dbReference type="CDD" id="cd06087">
    <property type="entry name" value="KOW_RPS4"/>
    <property type="match status" value="1"/>
</dbReference>
<dbReference type="CDD" id="cd00165">
    <property type="entry name" value="S4"/>
    <property type="match status" value="1"/>
</dbReference>
<dbReference type="FunFam" id="2.30.30.30:FF:000005">
    <property type="entry name" value="40S ribosomal protein S4"/>
    <property type="match status" value="1"/>
</dbReference>
<dbReference type="FunFam" id="2.40.50.740:FF:000001">
    <property type="entry name" value="40S ribosomal protein S4"/>
    <property type="match status" value="1"/>
</dbReference>
<dbReference type="FunFam" id="3.10.290.10:FF:000051">
    <property type="entry name" value="40S ribosomal protein S4, X isoform"/>
    <property type="match status" value="1"/>
</dbReference>
<dbReference type="Gene3D" id="2.30.30.30">
    <property type="match status" value="1"/>
</dbReference>
<dbReference type="Gene3D" id="2.40.50.740">
    <property type="match status" value="1"/>
</dbReference>
<dbReference type="Gene3D" id="3.10.290.10">
    <property type="entry name" value="RNA-binding S4 domain"/>
    <property type="match status" value="1"/>
</dbReference>
<dbReference type="HAMAP" id="MF_00485">
    <property type="entry name" value="Ribosomal_eS4"/>
    <property type="match status" value="1"/>
</dbReference>
<dbReference type="InterPro" id="IPR005824">
    <property type="entry name" value="KOW"/>
</dbReference>
<dbReference type="InterPro" id="IPR014722">
    <property type="entry name" value="Rib_uL2_dom2"/>
</dbReference>
<dbReference type="InterPro" id="IPR000876">
    <property type="entry name" value="Ribosomal_eS4"/>
</dbReference>
<dbReference type="InterPro" id="IPR032277">
    <property type="entry name" value="Ribosomal_eS4_C"/>
</dbReference>
<dbReference type="InterPro" id="IPR013845">
    <property type="entry name" value="Ribosomal_eS4_central_region"/>
</dbReference>
<dbReference type="InterPro" id="IPR038237">
    <property type="entry name" value="Ribosomal_eS4_central_sf"/>
</dbReference>
<dbReference type="InterPro" id="IPR041982">
    <property type="entry name" value="Ribosomal_eS4_KOW"/>
</dbReference>
<dbReference type="InterPro" id="IPR013843">
    <property type="entry name" value="Ribosomal_eS4_N"/>
</dbReference>
<dbReference type="InterPro" id="IPR018199">
    <property type="entry name" value="Ribosomal_eS4_N_CS"/>
</dbReference>
<dbReference type="InterPro" id="IPR002942">
    <property type="entry name" value="S4_RNA-bd"/>
</dbReference>
<dbReference type="InterPro" id="IPR036986">
    <property type="entry name" value="S4_RNA-bd_sf"/>
</dbReference>
<dbReference type="PANTHER" id="PTHR11581">
    <property type="entry name" value="30S/40S RIBOSOMAL PROTEIN S4"/>
    <property type="match status" value="1"/>
</dbReference>
<dbReference type="PANTHER" id="PTHR11581:SF0">
    <property type="entry name" value="SMALL RIBOSOMAL SUBUNIT PROTEIN ES4"/>
    <property type="match status" value="1"/>
</dbReference>
<dbReference type="Pfam" id="PF16121">
    <property type="entry name" value="40S_S4_C"/>
    <property type="match status" value="1"/>
</dbReference>
<dbReference type="Pfam" id="PF00467">
    <property type="entry name" value="KOW"/>
    <property type="match status" value="1"/>
</dbReference>
<dbReference type="Pfam" id="PF00900">
    <property type="entry name" value="Ribosomal_S4e"/>
    <property type="match status" value="1"/>
</dbReference>
<dbReference type="Pfam" id="PF08071">
    <property type="entry name" value="RS4NT"/>
    <property type="match status" value="1"/>
</dbReference>
<dbReference type="PIRSF" id="PIRSF002116">
    <property type="entry name" value="Ribosomal_S4"/>
    <property type="match status" value="1"/>
</dbReference>
<dbReference type="SMART" id="SM00363">
    <property type="entry name" value="S4"/>
    <property type="match status" value="1"/>
</dbReference>
<dbReference type="PROSITE" id="PS00528">
    <property type="entry name" value="RIBOSOMAL_S4E"/>
    <property type="match status" value="1"/>
</dbReference>
<dbReference type="PROSITE" id="PS50889">
    <property type="entry name" value="S4"/>
    <property type="match status" value="1"/>
</dbReference>
<protein>
    <recommendedName>
        <fullName evidence="4">Small ribosomal subunit protein eS4C</fullName>
    </recommendedName>
    <alternativeName>
        <fullName>40S ribosomal protein S4-C</fullName>
    </alternativeName>
</protein>
<keyword id="KW-0002">3D-structure</keyword>
<keyword id="KW-0963">Cytoplasm</keyword>
<keyword id="KW-0597">Phosphoprotein</keyword>
<keyword id="KW-1185">Reference proteome</keyword>
<keyword id="KW-0687">Ribonucleoprotein</keyword>
<keyword id="KW-0689">Ribosomal protein</keyword>
<keyword id="KW-0694">RNA-binding</keyword>
<keyword id="KW-0699">rRNA-binding</keyword>
<gene>
    <name type="primary">rps403</name>
    <name type="synonym">rps4c</name>
    <name type="ORF">SPAC959.07</name>
</gene>
<accession>Q9P4W9</accession>
<accession>O74654</accession>
<evidence type="ECO:0000250" key="1">
    <source>
        <dbReference type="UniProtKB" id="P0CX35"/>
    </source>
</evidence>
<evidence type="ECO:0000269" key="2">
    <source>
    </source>
</evidence>
<evidence type="ECO:0000269" key="3">
    <source>
    </source>
</evidence>
<evidence type="ECO:0000305" key="4"/>